<keyword id="KW-0963">Cytoplasm</keyword>
<keyword id="KW-0255">Endonuclease</keyword>
<keyword id="KW-0378">Hydrolase</keyword>
<keyword id="KW-0464">Manganese</keyword>
<keyword id="KW-0479">Metal-binding</keyword>
<keyword id="KW-0540">Nuclease</keyword>
<protein>
    <recommendedName>
        <fullName evidence="1">Ribonuclease HII</fullName>
        <shortName evidence="1">RNase HII</shortName>
        <ecNumber evidence="1">3.1.26.4</ecNumber>
    </recommendedName>
</protein>
<proteinExistence type="inferred from homology"/>
<dbReference type="EC" id="3.1.26.4" evidence="1"/>
<dbReference type="EMBL" id="CP000941">
    <property type="protein sequence ID" value="ACA11369.1"/>
    <property type="molecule type" value="Genomic_DNA"/>
</dbReference>
<dbReference type="RefSeq" id="WP_004085220.1">
    <property type="nucleotide sequence ID" value="NC_010513.1"/>
</dbReference>
<dbReference type="SMR" id="B0U235"/>
<dbReference type="KEGG" id="xfm:Xfasm12_0352"/>
<dbReference type="HOGENOM" id="CLU_036532_3_2_6"/>
<dbReference type="GO" id="GO:0005737">
    <property type="term" value="C:cytoplasm"/>
    <property type="evidence" value="ECO:0007669"/>
    <property type="project" value="UniProtKB-SubCell"/>
</dbReference>
<dbReference type="GO" id="GO:0032299">
    <property type="term" value="C:ribonuclease H2 complex"/>
    <property type="evidence" value="ECO:0007669"/>
    <property type="project" value="TreeGrafter"/>
</dbReference>
<dbReference type="GO" id="GO:0030145">
    <property type="term" value="F:manganese ion binding"/>
    <property type="evidence" value="ECO:0007669"/>
    <property type="project" value="UniProtKB-UniRule"/>
</dbReference>
<dbReference type="GO" id="GO:0003723">
    <property type="term" value="F:RNA binding"/>
    <property type="evidence" value="ECO:0007669"/>
    <property type="project" value="InterPro"/>
</dbReference>
<dbReference type="GO" id="GO:0004523">
    <property type="term" value="F:RNA-DNA hybrid ribonuclease activity"/>
    <property type="evidence" value="ECO:0007669"/>
    <property type="project" value="UniProtKB-UniRule"/>
</dbReference>
<dbReference type="GO" id="GO:0043137">
    <property type="term" value="P:DNA replication, removal of RNA primer"/>
    <property type="evidence" value="ECO:0007669"/>
    <property type="project" value="TreeGrafter"/>
</dbReference>
<dbReference type="GO" id="GO:0006298">
    <property type="term" value="P:mismatch repair"/>
    <property type="evidence" value="ECO:0007669"/>
    <property type="project" value="TreeGrafter"/>
</dbReference>
<dbReference type="CDD" id="cd07182">
    <property type="entry name" value="RNase_HII_bacteria_HII_like"/>
    <property type="match status" value="1"/>
</dbReference>
<dbReference type="FunFam" id="3.30.420.10:FF:000006">
    <property type="entry name" value="Ribonuclease HII"/>
    <property type="match status" value="1"/>
</dbReference>
<dbReference type="Gene3D" id="3.30.420.10">
    <property type="entry name" value="Ribonuclease H-like superfamily/Ribonuclease H"/>
    <property type="match status" value="1"/>
</dbReference>
<dbReference type="HAMAP" id="MF_00052_B">
    <property type="entry name" value="RNase_HII_B"/>
    <property type="match status" value="1"/>
</dbReference>
<dbReference type="InterPro" id="IPR022898">
    <property type="entry name" value="RNase_HII"/>
</dbReference>
<dbReference type="InterPro" id="IPR001352">
    <property type="entry name" value="RNase_HII/HIII"/>
</dbReference>
<dbReference type="InterPro" id="IPR024567">
    <property type="entry name" value="RNase_HII/HIII_dom"/>
</dbReference>
<dbReference type="InterPro" id="IPR012337">
    <property type="entry name" value="RNaseH-like_sf"/>
</dbReference>
<dbReference type="InterPro" id="IPR036397">
    <property type="entry name" value="RNaseH_sf"/>
</dbReference>
<dbReference type="NCBIfam" id="NF000595">
    <property type="entry name" value="PRK00015.1-3"/>
    <property type="match status" value="1"/>
</dbReference>
<dbReference type="PANTHER" id="PTHR10954">
    <property type="entry name" value="RIBONUCLEASE H2 SUBUNIT A"/>
    <property type="match status" value="1"/>
</dbReference>
<dbReference type="PANTHER" id="PTHR10954:SF18">
    <property type="entry name" value="RIBONUCLEASE HII"/>
    <property type="match status" value="1"/>
</dbReference>
<dbReference type="Pfam" id="PF01351">
    <property type="entry name" value="RNase_HII"/>
    <property type="match status" value="1"/>
</dbReference>
<dbReference type="SUPFAM" id="SSF53098">
    <property type="entry name" value="Ribonuclease H-like"/>
    <property type="match status" value="1"/>
</dbReference>
<dbReference type="PROSITE" id="PS51975">
    <property type="entry name" value="RNASE_H_2"/>
    <property type="match status" value="1"/>
</dbReference>
<organism>
    <name type="scientific">Xylella fastidiosa (strain M12)</name>
    <dbReference type="NCBI Taxonomy" id="405440"/>
    <lineage>
        <taxon>Bacteria</taxon>
        <taxon>Pseudomonadati</taxon>
        <taxon>Pseudomonadota</taxon>
        <taxon>Gammaproteobacteria</taxon>
        <taxon>Lysobacterales</taxon>
        <taxon>Lysobacteraceae</taxon>
        <taxon>Xylella</taxon>
    </lineage>
</organism>
<evidence type="ECO:0000255" key="1">
    <source>
        <dbReference type="HAMAP-Rule" id="MF_00052"/>
    </source>
</evidence>
<evidence type="ECO:0000255" key="2">
    <source>
        <dbReference type="PROSITE-ProRule" id="PRU01319"/>
    </source>
</evidence>
<gene>
    <name evidence="1" type="primary">rnhB</name>
    <name type="ordered locus">Xfasm12_0352</name>
</gene>
<reference key="1">
    <citation type="journal article" date="2010" name="J. Bacteriol.">
        <title>Whole genome sequences of two Xylella fastidiosa strains (M12 and M23) causing almond leaf scorch disease in California.</title>
        <authorList>
            <person name="Chen J."/>
            <person name="Xie G."/>
            <person name="Han S."/>
            <person name="Chertkov O."/>
            <person name="Sims D."/>
            <person name="Civerolo E.L."/>
        </authorList>
    </citation>
    <scope>NUCLEOTIDE SEQUENCE [LARGE SCALE GENOMIC DNA]</scope>
    <source>
        <strain>M12</strain>
    </source>
</reference>
<comment type="function">
    <text evidence="1">Endonuclease that specifically degrades the RNA of RNA-DNA hybrids.</text>
</comment>
<comment type="catalytic activity">
    <reaction evidence="1">
        <text>Endonucleolytic cleavage to 5'-phosphomonoester.</text>
        <dbReference type="EC" id="3.1.26.4"/>
    </reaction>
</comment>
<comment type="cofactor">
    <cofactor evidence="1">
        <name>Mn(2+)</name>
        <dbReference type="ChEBI" id="CHEBI:29035"/>
    </cofactor>
    <cofactor evidence="1">
        <name>Mg(2+)</name>
        <dbReference type="ChEBI" id="CHEBI:18420"/>
    </cofactor>
    <text evidence="1">Manganese or magnesium. Binds 1 divalent metal ion per monomer in the absence of substrate. May bind a second metal ion after substrate binding.</text>
</comment>
<comment type="subcellular location">
    <subcellularLocation>
        <location evidence="1">Cytoplasm</location>
    </subcellularLocation>
</comment>
<comment type="similarity">
    <text evidence="1">Belongs to the RNase HII family.</text>
</comment>
<feature type="chain" id="PRO_1000091669" description="Ribonuclease HII">
    <location>
        <begin position="1"/>
        <end position="234"/>
    </location>
</feature>
<feature type="domain" description="RNase H type-2" evidence="2">
    <location>
        <begin position="16"/>
        <end position="207"/>
    </location>
</feature>
<feature type="binding site" evidence="1">
    <location>
        <position position="22"/>
    </location>
    <ligand>
        <name>a divalent metal cation</name>
        <dbReference type="ChEBI" id="CHEBI:60240"/>
    </ligand>
</feature>
<feature type="binding site" evidence="1">
    <location>
        <position position="23"/>
    </location>
    <ligand>
        <name>a divalent metal cation</name>
        <dbReference type="ChEBI" id="CHEBI:60240"/>
    </ligand>
</feature>
<feature type="binding site" evidence="1">
    <location>
        <position position="115"/>
    </location>
    <ligand>
        <name>a divalent metal cation</name>
        <dbReference type="ChEBI" id="CHEBI:60240"/>
    </ligand>
</feature>
<sequence length="234" mass="25556">MVSQFDTQHLLNSNTALVAGVDEAGRGPLAGPVVVAAVVFDPSQPRINGLNDSKQLSPACRERLYAHIVERALAYKVVMIDSTQIDTLNIYQATMLGMRLAVEGVAHVAKSARIDGNRLPKNLPCPAEALVGGDARDPTIMAASILAKVTRDRHMVELHLQYPHYGFDKHKGYGTPAHLAALAEHGPCLEHRQSFAPVRRMLTPKAIHARQSAHQHNDNSPTKAAFNMLIERDD</sequence>
<name>RNH2_XYLFM</name>
<accession>B0U235</accession>